<geneLocation type="chloroplast"/>
<comment type="function">
    <text evidence="1">One of the primary rRNA binding proteins, it binds directly to 16S rRNA where it nucleates assembly of the head domain of the 30S subunit.</text>
</comment>
<comment type="subunit">
    <text>Part of the 30S ribosomal subunit.</text>
</comment>
<comment type="subcellular location">
    <subcellularLocation>
        <location>Plastid</location>
        <location>Chloroplast</location>
    </subcellularLocation>
</comment>
<comment type="similarity">
    <text evidence="3">Belongs to the universal ribosomal protein uS7 family.</text>
</comment>
<evidence type="ECO:0000250" key="1"/>
<evidence type="ECO:0000255" key="2">
    <source>
        <dbReference type="HAMAP-Rule" id="MF_00480"/>
    </source>
</evidence>
<evidence type="ECO:0000305" key="3"/>
<feature type="chain" id="PRO_0000124436" description="Small ribosomal subunit protein uS7cz/uS7cy">
    <location>
        <begin position="1"/>
        <end position="155"/>
    </location>
</feature>
<gene>
    <name type="primary">rps7-A</name>
</gene>
<gene>
    <name type="primary">rps7-B</name>
</gene>
<organism>
    <name type="scientific">Calycanthus floridus var. glaucus</name>
    <name type="common">Eastern sweetshrub</name>
    <name type="synonym">Calycanthus fertilis var. ferax</name>
    <dbReference type="NCBI Taxonomy" id="212734"/>
    <lineage>
        <taxon>Eukaryota</taxon>
        <taxon>Viridiplantae</taxon>
        <taxon>Streptophyta</taxon>
        <taxon>Embryophyta</taxon>
        <taxon>Tracheophyta</taxon>
        <taxon>Spermatophyta</taxon>
        <taxon>Magnoliopsida</taxon>
        <taxon>Magnoliidae</taxon>
        <taxon>Laurales</taxon>
        <taxon>Calycanthaceae</taxon>
        <taxon>Calycanthus</taxon>
    </lineage>
</organism>
<name>RR7_CALFG</name>
<sequence>MSRRGTAEEKTAKSDPIYRNRLVNMLVNRILKHGKKSLAYQIVYQAVKKIQQKTETNPLSVLRQAICRVTPDIAVKARRVGGSTHQVPIEIGSTQGKALAIRWLLGASRKRPGRNMAFKLSSELVDAAKGSGDAIRKKEETHRMAEANRAFAHFR</sequence>
<keyword id="KW-0150">Chloroplast</keyword>
<keyword id="KW-0934">Plastid</keyword>
<keyword id="KW-0687">Ribonucleoprotein</keyword>
<keyword id="KW-0689">Ribosomal protein</keyword>
<keyword id="KW-0694">RNA-binding</keyword>
<keyword id="KW-0699">rRNA-binding</keyword>
<proteinExistence type="inferred from homology"/>
<reference key="1">
    <citation type="journal article" date="2003" name="Plant Syst. Evol.">
        <title>The chloroplast genome of the 'basal' angiosperm Calycanthus fertilis -- structural and phylogenetic analyses.</title>
        <authorList>
            <person name="Goremykin V."/>
            <person name="Hirsch-Ernst K.I."/>
            <person name="Woelfl S."/>
            <person name="Hellwig F.H."/>
        </authorList>
    </citation>
    <scope>NUCLEOTIDE SEQUENCE [LARGE SCALE GENOMIC DNA]</scope>
</reference>
<dbReference type="EMBL" id="AJ428413">
    <property type="protein sequence ID" value="CAD28767.1"/>
    <property type="molecule type" value="Genomic_DNA"/>
</dbReference>
<dbReference type="EMBL" id="AJ428413">
    <property type="protein sequence ID" value="CAD28783.1"/>
    <property type="molecule type" value="Genomic_DNA"/>
</dbReference>
<dbReference type="SMR" id="Q7HKW9"/>
<dbReference type="GO" id="GO:0009507">
    <property type="term" value="C:chloroplast"/>
    <property type="evidence" value="ECO:0007669"/>
    <property type="project" value="UniProtKB-SubCell"/>
</dbReference>
<dbReference type="GO" id="GO:0015935">
    <property type="term" value="C:small ribosomal subunit"/>
    <property type="evidence" value="ECO:0007669"/>
    <property type="project" value="InterPro"/>
</dbReference>
<dbReference type="GO" id="GO:0019843">
    <property type="term" value="F:rRNA binding"/>
    <property type="evidence" value="ECO:0007669"/>
    <property type="project" value="UniProtKB-UniRule"/>
</dbReference>
<dbReference type="GO" id="GO:0003735">
    <property type="term" value="F:structural constituent of ribosome"/>
    <property type="evidence" value="ECO:0007669"/>
    <property type="project" value="InterPro"/>
</dbReference>
<dbReference type="GO" id="GO:0006412">
    <property type="term" value="P:translation"/>
    <property type="evidence" value="ECO:0007669"/>
    <property type="project" value="UniProtKB-UniRule"/>
</dbReference>
<dbReference type="CDD" id="cd14871">
    <property type="entry name" value="uS7_Chloroplast"/>
    <property type="match status" value="1"/>
</dbReference>
<dbReference type="FunFam" id="1.10.455.10:FF:000001">
    <property type="entry name" value="30S ribosomal protein S7"/>
    <property type="match status" value="1"/>
</dbReference>
<dbReference type="Gene3D" id="1.10.455.10">
    <property type="entry name" value="Ribosomal protein S7 domain"/>
    <property type="match status" value="1"/>
</dbReference>
<dbReference type="HAMAP" id="MF_00480_B">
    <property type="entry name" value="Ribosomal_uS7_B"/>
    <property type="match status" value="1"/>
</dbReference>
<dbReference type="InterPro" id="IPR000235">
    <property type="entry name" value="Ribosomal_uS7"/>
</dbReference>
<dbReference type="InterPro" id="IPR005717">
    <property type="entry name" value="Ribosomal_uS7_bac/org-type"/>
</dbReference>
<dbReference type="InterPro" id="IPR020606">
    <property type="entry name" value="Ribosomal_uS7_CS"/>
</dbReference>
<dbReference type="InterPro" id="IPR023798">
    <property type="entry name" value="Ribosomal_uS7_dom"/>
</dbReference>
<dbReference type="InterPro" id="IPR036823">
    <property type="entry name" value="Ribosomal_uS7_dom_sf"/>
</dbReference>
<dbReference type="NCBIfam" id="TIGR01029">
    <property type="entry name" value="rpsG_bact"/>
    <property type="match status" value="1"/>
</dbReference>
<dbReference type="PANTHER" id="PTHR11205">
    <property type="entry name" value="RIBOSOMAL PROTEIN S7"/>
    <property type="match status" value="1"/>
</dbReference>
<dbReference type="Pfam" id="PF00177">
    <property type="entry name" value="Ribosomal_S7"/>
    <property type="match status" value="1"/>
</dbReference>
<dbReference type="PIRSF" id="PIRSF002122">
    <property type="entry name" value="RPS7p_RPS7a_RPS5e_RPS7o"/>
    <property type="match status" value="1"/>
</dbReference>
<dbReference type="SUPFAM" id="SSF47973">
    <property type="entry name" value="Ribosomal protein S7"/>
    <property type="match status" value="1"/>
</dbReference>
<dbReference type="PROSITE" id="PS00052">
    <property type="entry name" value="RIBOSOMAL_S7"/>
    <property type="match status" value="1"/>
</dbReference>
<protein>
    <recommendedName>
        <fullName evidence="2">Small ribosomal subunit protein uS7cz/uS7cy</fullName>
    </recommendedName>
    <alternativeName>
        <fullName>30S ribosomal protein S7, chloroplastic</fullName>
    </alternativeName>
</protein>
<accession>Q7HKW9</accession>